<sequence length="308" mass="34968">MQANIFPFYPQPRTPFKFDTKIIEIIIICIVTACTFIIILPGIRGKSRSIWLLRILTSLFIGAVILAVNFTSDWEMGTITATTVYKSFSHSMLNASIGLWIGLKGLNITLIGNPEYQLNETINYNEEFAWESANQFETSYKDALERGLPFPIVYVAEKFTISSDCGLFQQYCISTYYSSGIMWIAFCSWILYNVLFSMPVILYGIYMMFVTAICMLVSLISFASVRKAPVCNIQFGNSILKTHFGVSYWLSLITGLLCLIISLVLLFLYKTQPKVLQLIFSYGEEEDLSNKSENEEEHSSVLSLNEIL</sequence>
<feature type="chain" id="PRO_0000264243" description="Dual oxidase maturation factor 1">
    <location>
        <begin position="1"/>
        <end position="308"/>
    </location>
</feature>
<feature type="topological domain" description="Extracellular" evidence="2">
    <location>
        <begin position="1"/>
        <end position="21"/>
    </location>
</feature>
<feature type="transmembrane region" description="Helical" evidence="2">
    <location>
        <begin position="22"/>
        <end position="42"/>
    </location>
</feature>
<feature type="topological domain" description="Cytoplasmic" evidence="2">
    <location>
        <begin position="43"/>
        <end position="49"/>
    </location>
</feature>
<feature type="transmembrane region" description="Helical" evidence="2">
    <location>
        <begin position="50"/>
        <end position="70"/>
    </location>
</feature>
<feature type="topological domain" description="Extracellular" evidence="2">
    <location>
        <begin position="71"/>
        <end position="91"/>
    </location>
</feature>
<feature type="transmembrane region" description="Helical" evidence="2">
    <location>
        <begin position="92"/>
        <end position="112"/>
    </location>
</feature>
<feature type="topological domain" description="Cytoplasmic" evidence="2">
    <location>
        <begin position="113"/>
        <end position="175"/>
    </location>
</feature>
<feature type="transmembrane region" description="Helical" evidence="2">
    <location>
        <begin position="176"/>
        <end position="198"/>
    </location>
</feature>
<feature type="topological domain" description="Extracellular" evidence="2">
    <location>
        <position position="199"/>
    </location>
</feature>
<feature type="transmembrane region" description="Helical" evidence="2">
    <location>
        <begin position="200"/>
        <end position="220"/>
    </location>
</feature>
<feature type="topological domain" description="Cytoplasmic" evidence="2">
    <location>
        <begin position="221"/>
        <end position="247"/>
    </location>
</feature>
<feature type="transmembrane region" description="Helical" evidence="2">
    <location>
        <begin position="248"/>
        <end position="268"/>
    </location>
</feature>
<feature type="topological domain" description="Extracellular" evidence="2">
    <location>
        <begin position="269"/>
        <end position="308"/>
    </location>
</feature>
<feature type="glycosylation site" description="N-linked (GlcNAc...) asparagine" evidence="2">
    <location>
        <position position="290"/>
    </location>
</feature>
<organism>
    <name type="scientific">Xenopus laevis</name>
    <name type="common">African clawed frog</name>
    <dbReference type="NCBI Taxonomy" id="8355"/>
    <lineage>
        <taxon>Eukaryota</taxon>
        <taxon>Metazoa</taxon>
        <taxon>Chordata</taxon>
        <taxon>Craniata</taxon>
        <taxon>Vertebrata</taxon>
        <taxon>Euteleostomi</taxon>
        <taxon>Amphibia</taxon>
        <taxon>Batrachia</taxon>
        <taxon>Anura</taxon>
        <taxon>Pipoidea</taxon>
        <taxon>Pipidae</taxon>
        <taxon>Xenopodinae</taxon>
        <taxon>Xenopus</taxon>
        <taxon>Xenopus</taxon>
    </lineage>
</organism>
<keyword id="KW-0325">Glycoprotein</keyword>
<keyword id="KW-0472">Membrane</keyword>
<keyword id="KW-0653">Protein transport</keyword>
<keyword id="KW-1185">Reference proteome</keyword>
<keyword id="KW-0812">Transmembrane</keyword>
<keyword id="KW-1133">Transmembrane helix</keyword>
<keyword id="KW-0813">Transport</keyword>
<evidence type="ECO:0000250" key="1"/>
<evidence type="ECO:0000255" key="2"/>
<evidence type="ECO:0000305" key="3"/>
<gene>
    <name type="primary">duoxa1</name>
</gene>
<protein>
    <recommendedName>
        <fullName>Dual oxidase maturation factor 1</fullName>
    </recommendedName>
    <alternativeName>
        <fullName>Dual oxidase activator 1</fullName>
    </alternativeName>
</protein>
<proteinExistence type="evidence at transcript level"/>
<accession>Q6DDK3</accession>
<comment type="function">
    <text evidence="1">Possible role in maturation and transport from the endoplasmic reticulum to the plasma membrane of functional dual oxidase.</text>
</comment>
<comment type="subcellular location">
    <subcellularLocation>
        <location evidence="3">Membrane</location>
        <topology evidence="3">Multi-pass membrane protein</topology>
    </subcellularLocation>
</comment>
<comment type="similarity">
    <text evidence="3">Belongs to the DUOXA family.</text>
</comment>
<reference key="1">
    <citation type="submission" date="2004-07" db="EMBL/GenBank/DDBJ databases">
        <authorList>
            <consortium name="NIH - Xenopus Gene Collection (XGC) project"/>
        </authorList>
    </citation>
    <scope>NUCLEOTIDE SEQUENCE [LARGE SCALE MRNA]</scope>
    <source>
        <tissue>Brain</tissue>
    </source>
</reference>
<dbReference type="EMBL" id="BC077555">
    <property type="protein sequence ID" value="AAH77555.1"/>
    <property type="molecule type" value="mRNA"/>
</dbReference>
<dbReference type="RefSeq" id="NP_001086852.1">
    <property type="nucleotide sequence ID" value="NM_001093383.1"/>
</dbReference>
<dbReference type="SMR" id="Q6DDK3"/>
<dbReference type="GlyCosmos" id="Q6DDK3">
    <property type="glycosylation" value="1 site, No reported glycans"/>
</dbReference>
<dbReference type="DNASU" id="446687"/>
<dbReference type="GeneID" id="446687"/>
<dbReference type="KEGG" id="xla:446687"/>
<dbReference type="AGR" id="Xenbase:XB-GENE-6255655"/>
<dbReference type="CTD" id="446687"/>
<dbReference type="Xenbase" id="XB-GENE-6255655">
    <property type="gene designation" value="duoxa1.L"/>
</dbReference>
<dbReference type="OrthoDB" id="10042652at2759"/>
<dbReference type="Proteomes" id="UP000186698">
    <property type="component" value="Chromosome 3L"/>
</dbReference>
<dbReference type="Bgee" id="446687">
    <property type="expression patterns" value="Expressed in zone of skin and 2 other cell types or tissues"/>
</dbReference>
<dbReference type="GO" id="GO:0005789">
    <property type="term" value="C:endoplasmic reticulum membrane"/>
    <property type="evidence" value="ECO:0007669"/>
    <property type="project" value="InterPro"/>
</dbReference>
<dbReference type="GO" id="GO:0016020">
    <property type="term" value="C:membrane"/>
    <property type="evidence" value="ECO:0000318"/>
    <property type="project" value="GO_Central"/>
</dbReference>
<dbReference type="GO" id="GO:0015031">
    <property type="term" value="P:protein transport"/>
    <property type="evidence" value="ECO:0007669"/>
    <property type="project" value="UniProtKB-KW"/>
</dbReference>
<dbReference type="InterPro" id="IPR018469">
    <property type="entry name" value="Dual_oxidase_maturation_fac"/>
</dbReference>
<dbReference type="PANTHER" id="PTHR31158">
    <property type="entry name" value="DUAL OXIDASE 2"/>
    <property type="match status" value="1"/>
</dbReference>
<dbReference type="PANTHER" id="PTHR31158:SF12">
    <property type="entry name" value="DUAL OXIDASE MATURATION FACTOR 1"/>
    <property type="match status" value="1"/>
</dbReference>
<dbReference type="Pfam" id="PF10204">
    <property type="entry name" value="DuoxA"/>
    <property type="match status" value="1"/>
</dbReference>
<name>DOXA1_XENLA</name>